<dbReference type="EC" id="6.1.1.16" evidence="1"/>
<dbReference type="EMBL" id="CP000095">
    <property type="protein sequence ID" value="AAZ58240.1"/>
    <property type="molecule type" value="Genomic_DNA"/>
</dbReference>
<dbReference type="RefSeq" id="WP_011294837.1">
    <property type="nucleotide sequence ID" value="NC_007335.2"/>
</dbReference>
<dbReference type="SMR" id="Q46JT8"/>
<dbReference type="STRING" id="59920.PMN2A_0749"/>
<dbReference type="KEGG" id="pmn:PMN2A_0749"/>
<dbReference type="HOGENOM" id="CLU_013528_0_1_3"/>
<dbReference type="OrthoDB" id="9815130at2"/>
<dbReference type="PhylomeDB" id="Q46JT8"/>
<dbReference type="Proteomes" id="UP000002535">
    <property type="component" value="Chromosome"/>
</dbReference>
<dbReference type="GO" id="GO:0005829">
    <property type="term" value="C:cytosol"/>
    <property type="evidence" value="ECO:0007669"/>
    <property type="project" value="TreeGrafter"/>
</dbReference>
<dbReference type="GO" id="GO:0005524">
    <property type="term" value="F:ATP binding"/>
    <property type="evidence" value="ECO:0007669"/>
    <property type="project" value="UniProtKB-UniRule"/>
</dbReference>
<dbReference type="GO" id="GO:0004817">
    <property type="term" value="F:cysteine-tRNA ligase activity"/>
    <property type="evidence" value="ECO:0007669"/>
    <property type="project" value="UniProtKB-UniRule"/>
</dbReference>
<dbReference type="GO" id="GO:0008270">
    <property type="term" value="F:zinc ion binding"/>
    <property type="evidence" value="ECO:0007669"/>
    <property type="project" value="UniProtKB-UniRule"/>
</dbReference>
<dbReference type="GO" id="GO:0006423">
    <property type="term" value="P:cysteinyl-tRNA aminoacylation"/>
    <property type="evidence" value="ECO:0007669"/>
    <property type="project" value="UniProtKB-UniRule"/>
</dbReference>
<dbReference type="CDD" id="cd00672">
    <property type="entry name" value="CysRS_core"/>
    <property type="match status" value="1"/>
</dbReference>
<dbReference type="FunFam" id="3.40.50.620:FF:000009">
    <property type="entry name" value="Cysteine--tRNA ligase"/>
    <property type="match status" value="1"/>
</dbReference>
<dbReference type="Gene3D" id="1.20.120.1910">
    <property type="entry name" value="Cysteine-tRNA ligase, C-terminal anti-codon recognition domain"/>
    <property type="match status" value="1"/>
</dbReference>
<dbReference type="Gene3D" id="3.40.50.620">
    <property type="entry name" value="HUPs"/>
    <property type="match status" value="1"/>
</dbReference>
<dbReference type="HAMAP" id="MF_00041">
    <property type="entry name" value="Cys_tRNA_synth"/>
    <property type="match status" value="1"/>
</dbReference>
<dbReference type="InterPro" id="IPR015803">
    <property type="entry name" value="Cys-tRNA-ligase"/>
</dbReference>
<dbReference type="InterPro" id="IPR015273">
    <property type="entry name" value="Cys-tRNA-synt_Ia_DALR"/>
</dbReference>
<dbReference type="InterPro" id="IPR024909">
    <property type="entry name" value="Cys-tRNA/MSH_ligase"/>
</dbReference>
<dbReference type="InterPro" id="IPR014729">
    <property type="entry name" value="Rossmann-like_a/b/a_fold"/>
</dbReference>
<dbReference type="InterPro" id="IPR032678">
    <property type="entry name" value="tRNA-synt_1_cat_dom"/>
</dbReference>
<dbReference type="InterPro" id="IPR009080">
    <property type="entry name" value="tRNAsynth_Ia_anticodon-bd"/>
</dbReference>
<dbReference type="NCBIfam" id="TIGR00435">
    <property type="entry name" value="cysS"/>
    <property type="match status" value="1"/>
</dbReference>
<dbReference type="PANTHER" id="PTHR10890:SF3">
    <property type="entry name" value="CYSTEINE--TRNA LIGASE, CYTOPLASMIC"/>
    <property type="match status" value="1"/>
</dbReference>
<dbReference type="PANTHER" id="PTHR10890">
    <property type="entry name" value="CYSTEINYL-TRNA SYNTHETASE"/>
    <property type="match status" value="1"/>
</dbReference>
<dbReference type="Pfam" id="PF09190">
    <property type="entry name" value="DALR_2"/>
    <property type="match status" value="1"/>
</dbReference>
<dbReference type="Pfam" id="PF01406">
    <property type="entry name" value="tRNA-synt_1e"/>
    <property type="match status" value="1"/>
</dbReference>
<dbReference type="PRINTS" id="PR00983">
    <property type="entry name" value="TRNASYNTHCYS"/>
</dbReference>
<dbReference type="SMART" id="SM00840">
    <property type="entry name" value="DALR_2"/>
    <property type="match status" value="1"/>
</dbReference>
<dbReference type="SUPFAM" id="SSF47323">
    <property type="entry name" value="Anticodon-binding domain of a subclass of class I aminoacyl-tRNA synthetases"/>
    <property type="match status" value="1"/>
</dbReference>
<dbReference type="SUPFAM" id="SSF52374">
    <property type="entry name" value="Nucleotidylyl transferase"/>
    <property type="match status" value="1"/>
</dbReference>
<name>SYC_PROMT</name>
<gene>
    <name evidence="1" type="primary">cysS</name>
    <name type="ordered locus">PMN2A_0749</name>
</gene>
<proteinExistence type="inferred from homology"/>
<comment type="catalytic activity">
    <reaction evidence="1">
        <text>tRNA(Cys) + L-cysteine + ATP = L-cysteinyl-tRNA(Cys) + AMP + diphosphate</text>
        <dbReference type="Rhea" id="RHEA:17773"/>
        <dbReference type="Rhea" id="RHEA-COMP:9661"/>
        <dbReference type="Rhea" id="RHEA-COMP:9679"/>
        <dbReference type="ChEBI" id="CHEBI:30616"/>
        <dbReference type="ChEBI" id="CHEBI:33019"/>
        <dbReference type="ChEBI" id="CHEBI:35235"/>
        <dbReference type="ChEBI" id="CHEBI:78442"/>
        <dbReference type="ChEBI" id="CHEBI:78517"/>
        <dbReference type="ChEBI" id="CHEBI:456215"/>
        <dbReference type="EC" id="6.1.1.16"/>
    </reaction>
</comment>
<comment type="cofactor">
    <cofactor evidence="1">
        <name>Zn(2+)</name>
        <dbReference type="ChEBI" id="CHEBI:29105"/>
    </cofactor>
    <text evidence="1">Binds 1 zinc ion per subunit.</text>
</comment>
<comment type="subunit">
    <text evidence="1">Monomer.</text>
</comment>
<comment type="subcellular location">
    <subcellularLocation>
        <location evidence="1">Cytoplasm</location>
    </subcellularLocation>
</comment>
<comment type="similarity">
    <text evidence="1">Belongs to the class-I aminoacyl-tRNA synthetase family.</text>
</comment>
<feature type="chain" id="PRO_0000240934" description="Cysteine--tRNA ligase">
    <location>
        <begin position="1"/>
        <end position="500"/>
    </location>
</feature>
<feature type="short sequence motif" description="'HIGH' region">
    <location>
        <begin position="31"/>
        <end position="41"/>
    </location>
</feature>
<feature type="short sequence motif" description="'KMSKS' region">
    <location>
        <begin position="270"/>
        <end position="274"/>
    </location>
</feature>
<feature type="binding site" evidence="1">
    <location>
        <position position="29"/>
    </location>
    <ligand>
        <name>Zn(2+)</name>
        <dbReference type="ChEBI" id="CHEBI:29105"/>
    </ligand>
</feature>
<feature type="binding site" evidence="1">
    <location>
        <position position="213"/>
    </location>
    <ligand>
        <name>Zn(2+)</name>
        <dbReference type="ChEBI" id="CHEBI:29105"/>
    </ligand>
</feature>
<feature type="binding site" evidence="1">
    <location>
        <position position="238"/>
    </location>
    <ligand>
        <name>Zn(2+)</name>
        <dbReference type="ChEBI" id="CHEBI:29105"/>
    </ligand>
</feature>
<feature type="binding site" evidence="1">
    <location>
        <position position="242"/>
    </location>
    <ligand>
        <name>Zn(2+)</name>
        <dbReference type="ChEBI" id="CHEBI:29105"/>
    </ligand>
</feature>
<feature type="binding site" evidence="1">
    <location>
        <position position="273"/>
    </location>
    <ligand>
        <name>ATP</name>
        <dbReference type="ChEBI" id="CHEBI:30616"/>
    </ligand>
</feature>
<protein>
    <recommendedName>
        <fullName evidence="1">Cysteine--tRNA ligase</fullName>
        <ecNumber evidence="1">6.1.1.16</ecNumber>
    </recommendedName>
    <alternativeName>
        <fullName evidence="1">Cysteinyl-tRNA synthetase</fullName>
        <shortName evidence="1">CysRS</shortName>
    </alternativeName>
</protein>
<evidence type="ECO:0000255" key="1">
    <source>
        <dbReference type="HAMAP-Rule" id="MF_00041"/>
    </source>
</evidence>
<organism>
    <name type="scientific">Prochlorococcus marinus (strain NATL2A)</name>
    <dbReference type="NCBI Taxonomy" id="59920"/>
    <lineage>
        <taxon>Bacteria</taxon>
        <taxon>Bacillati</taxon>
        <taxon>Cyanobacteriota</taxon>
        <taxon>Cyanophyceae</taxon>
        <taxon>Synechococcales</taxon>
        <taxon>Prochlorococcaceae</taxon>
        <taxon>Prochlorococcus</taxon>
    </lineage>
</organism>
<sequence>MSLKFTNTLSKKKEDFISINPNQVKIYCCGVTVYDLCHLGHARSYLNWDVLRRFLIWKGFEVKFVQNFTDIDDKIINRANKEGCSTDELSERNIDEFHKDMDTLSILRPTSMPRATKCLHQIINFIEELEQKKVAYSSNGDVYFSVDKHKNYGKLSGREIEDQIDNAAGRLKTNQKESKKNSLDFALWKKSNSGEVSYSSPWGNGRPGWHIECSAMVKQELGESIDIHLGGSDLIFPHHENEIAQSEACNGKELAKYWLHNGMVNVGGEKMSKSLGNFTTIRSLLEEDISPMTLRFFVLQTNYRKPLDFTEEALKAASKGWERLNNCLSFGYIYKIKDQSKNEIFLDKPIKKSANTKLDKNSFKLLSDFEKYMDDDLNTSGALSILFELSQPIRKIINFLKEKDINEVDQDELNQVFNKWELLSELAGVLGLKVNLNQEKPKNNPELDTNKIEELIKNRSLAKANKDFLLADKIRADLKNIGIDLIDKPKGVTEWKQLSD</sequence>
<reference key="1">
    <citation type="journal article" date="2007" name="PLoS Genet.">
        <title>Patterns and implications of gene gain and loss in the evolution of Prochlorococcus.</title>
        <authorList>
            <person name="Kettler G.C."/>
            <person name="Martiny A.C."/>
            <person name="Huang K."/>
            <person name="Zucker J."/>
            <person name="Coleman M.L."/>
            <person name="Rodrigue S."/>
            <person name="Chen F."/>
            <person name="Lapidus A."/>
            <person name="Ferriera S."/>
            <person name="Johnson J."/>
            <person name="Steglich C."/>
            <person name="Church G.M."/>
            <person name="Richardson P."/>
            <person name="Chisholm S.W."/>
        </authorList>
    </citation>
    <scope>NUCLEOTIDE SEQUENCE [LARGE SCALE GENOMIC DNA]</scope>
    <source>
        <strain>NATL2A</strain>
    </source>
</reference>
<accession>Q46JT8</accession>
<keyword id="KW-0030">Aminoacyl-tRNA synthetase</keyword>
<keyword id="KW-0067">ATP-binding</keyword>
<keyword id="KW-0963">Cytoplasm</keyword>
<keyword id="KW-0436">Ligase</keyword>
<keyword id="KW-0479">Metal-binding</keyword>
<keyword id="KW-0547">Nucleotide-binding</keyword>
<keyword id="KW-0648">Protein biosynthesis</keyword>
<keyword id="KW-1185">Reference proteome</keyword>
<keyword id="KW-0862">Zinc</keyword>